<gene>
    <name evidence="1" type="primary">murG</name>
    <name type="ordered locus">Mjls_3267</name>
</gene>
<accession>A3Q1L8</accession>
<keyword id="KW-0131">Cell cycle</keyword>
<keyword id="KW-0132">Cell division</keyword>
<keyword id="KW-1003">Cell membrane</keyword>
<keyword id="KW-0133">Cell shape</keyword>
<keyword id="KW-0961">Cell wall biogenesis/degradation</keyword>
<keyword id="KW-0328">Glycosyltransferase</keyword>
<keyword id="KW-0472">Membrane</keyword>
<keyword id="KW-0573">Peptidoglycan synthesis</keyword>
<keyword id="KW-0808">Transferase</keyword>
<feature type="chain" id="PRO_0000315120" description="UDP-N-acetylglucosamine--N-acetylmuramyl-(pentapeptide) pyrophosphoryl-undecaprenol N-acetylglucosamine transferase">
    <location>
        <begin position="1"/>
        <end position="373"/>
    </location>
</feature>
<feature type="binding site" evidence="1">
    <location>
        <begin position="14"/>
        <end position="16"/>
    </location>
    <ligand>
        <name>UDP-N-acetyl-alpha-D-glucosamine</name>
        <dbReference type="ChEBI" id="CHEBI:57705"/>
    </ligand>
</feature>
<feature type="binding site" evidence="1">
    <location>
        <position position="128"/>
    </location>
    <ligand>
        <name>UDP-N-acetyl-alpha-D-glucosamine</name>
        <dbReference type="ChEBI" id="CHEBI:57705"/>
    </ligand>
</feature>
<feature type="binding site" evidence="1">
    <location>
        <position position="165"/>
    </location>
    <ligand>
        <name>UDP-N-acetyl-alpha-D-glucosamine</name>
        <dbReference type="ChEBI" id="CHEBI:57705"/>
    </ligand>
</feature>
<feature type="binding site" evidence="1">
    <location>
        <position position="199"/>
    </location>
    <ligand>
        <name>UDP-N-acetyl-alpha-D-glucosamine</name>
        <dbReference type="ChEBI" id="CHEBI:57705"/>
    </ligand>
</feature>
<feature type="binding site" evidence="1">
    <location>
        <position position="295"/>
    </location>
    <ligand>
        <name>UDP-N-acetyl-alpha-D-glucosamine</name>
        <dbReference type="ChEBI" id="CHEBI:57705"/>
    </ligand>
</feature>
<evidence type="ECO:0000255" key="1">
    <source>
        <dbReference type="HAMAP-Rule" id="MF_00033"/>
    </source>
</evidence>
<comment type="function">
    <text evidence="1">Cell wall formation. Catalyzes the transfer of a GlcNAc subunit on undecaprenyl-pyrophosphoryl-MurNAc-pentapeptide (lipid intermediate I) to form undecaprenyl-pyrophosphoryl-MurNAc-(pentapeptide)GlcNAc (lipid intermediate II).</text>
</comment>
<comment type="catalytic activity">
    <reaction evidence="1">
        <text>di-trans,octa-cis-undecaprenyl diphospho-N-acetyl-alpha-D-muramoyl-L-alanyl-D-glutamyl-meso-2,6-diaminopimeloyl-D-alanyl-D-alanine + UDP-N-acetyl-alpha-D-glucosamine = di-trans,octa-cis-undecaprenyl diphospho-[N-acetyl-alpha-D-glucosaminyl-(1-&gt;4)]-N-acetyl-alpha-D-muramoyl-L-alanyl-D-glutamyl-meso-2,6-diaminopimeloyl-D-alanyl-D-alanine + UDP + H(+)</text>
        <dbReference type="Rhea" id="RHEA:31227"/>
        <dbReference type="ChEBI" id="CHEBI:15378"/>
        <dbReference type="ChEBI" id="CHEBI:57705"/>
        <dbReference type="ChEBI" id="CHEBI:58223"/>
        <dbReference type="ChEBI" id="CHEBI:61387"/>
        <dbReference type="ChEBI" id="CHEBI:61388"/>
        <dbReference type="EC" id="2.4.1.227"/>
    </reaction>
</comment>
<comment type="pathway">
    <text evidence="1">Cell wall biogenesis; peptidoglycan biosynthesis.</text>
</comment>
<comment type="subcellular location">
    <subcellularLocation>
        <location evidence="1">Cell membrane</location>
        <topology evidence="1">Peripheral membrane protein</topology>
        <orientation evidence="1">Cytoplasmic side</orientation>
    </subcellularLocation>
</comment>
<comment type="similarity">
    <text evidence="1">Belongs to the glycosyltransferase 28 family. MurG subfamily.</text>
</comment>
<dbReference type="EC" id="2.4.1.227" evidence="1"/>
<dbReference type="EMBL" id="CP000580">
    <property type="protein sequence ID" value="ABN99045.1"/>
    <property type="molecule type" value="Genomic_DNA"/>
</dbReference>
<dbReference type="SMR" id="A3Q1L8"/>
<dbReference type="CAZy" id="GT28">
    <property type="family name" value="Glycosyltransferase Family 28"/>
</dbReference>
<dbReference type="KEGG" id="mjl:Mjls_3267"/>
<dbReference type="HOGENOM" id="CLU_037404_1_0_11"/>
<dbReference type="BioCyc" id="MSP164757:G1G8C-3293-MONOMER"/>
<dbReference type="UniPathway" id="UPA00219"/>
<dbReference type="GO" id="GO:0005886">
    <property type="term" value="C:plasma membrane"/>
    <property type="evidence" value="ECO:0007669"/>
    <property type="project" value="UniProtKB-SubCell"/>
</dbReference>
<dbReference type="GO" id="GO:0051991">
    <property type="term" value="F:UDP-N-acetyl-D-glucosamine:N-acetylmuramoyl-L-alanyl-D-glutamyl-meso-2,6-diaminopimelyl-D-alanyl-D-alanine-diphosphoundecaprenol 4-beta-N-acetylglucosaminlytransferase activity"/>
    <property type="evidence" value="ECO:0007669"/>
    <property type="project" value="RHEA"/>
</dbReference>
<dbReference type="GO" id="GO:0050511">
    <property type="term" value="F:undecaprenyldiphospho-muramoylpentapeptide beta-N-acetylglucosaminyltransferase activity"/>
    <property type="evidence" value="ECO:0007669"/>
    <property type="project" value="UniProtKB-UniRule"/>
</dbReference>
<dbReference type="GO" id="GO:0005975">
    <property type="term" value="P:carbohydrate metabolic process"/>
    <property type="evidence" value="ECO:0007669"/>
    <property type="project" value="InterPro"/>
</dbReference>
<dbReference type="GO" id="GO:0051301">
    <property type="term" value="P:cell division"/>
    <property type="evidence" value="ECO:0007669"/>
    <property type="project" value="UniProtKB-KW"/>
</dbReference>
<dbReference type="GO" id="GO:0071555">
    <property type="term" value="P:cell wall organization"/>
    <property type="evidence" value="ECO:0007669"/>
    <property type="project" value="UniProtKB-KW"/>
</dbReference>
<dbReference type="GO" id="GO:0030259">
    <property type="term" value="P:lipid glycosylation"/>
    <property type="evidence" value="ECO:0007669"/>
    <property type="project" value="UniProtKB-UniRule"/>
</dbReference>
<dbReference type="GO" id="GO:0009252">
    <property type="term" value="P:peptidoglycan biosynthetic process"/>
    <property type="evidence" value="ECO:0007669"/>
    <property type="project" value="UniProtKB-UniRule"/>
</dbReference>
<dbReference type="GO" id="GO:0008360">
    <property type="term" value="P:regulation of cell shape"/>
    <property type="evidence" value="ECO:0007669"/>
    <property type="project" value="UniProtKB-KW"/>
</dbReference>
<dbReference type="CDD" id="cd03785">
    <property type="entry name" value="GT28_MurG"/>
    <property type="match status" value="1"/>
</dbReference>
<dbReference type="Gene3D" id="3.40.50.2000">
    <property type="entry name" value="Glycogen Phosphorylase B"/>
    <property type="match status" value="2"/>
</dbReference>
<dbReference type="HAMAP" id="MF_00033">
    <property type="entry name" value="MurG"/>
    <property type="match status" value="1"/>
</dbReference>
<dbReference type="InterPro" id="IPR006009">
    <property type="entry name" value="GlcNAc_MurG"/>
</dbReference>
<dbReference type="InterPro" id="IPR007235">
    <property type="entry name" value="Glyco_trans_28_C"/>
</dbReference>
<dbReference type="InterPro" id="IPR004276">
    <property type="entry name" value="GlycoTrans_28_N"/>
</dbReference>
<dbReference type="NCBIfam" id="TIGR01133">
    <property type="entry name" value="murG"/>
    <property type="match status" value="1"/>
</dbReference>
<dbReference type="PANTHER" id="PTHR21015:SF22">
    <property type="entry name" value="GLYCOSYLTRANSFERASE"/>
    <property type="match status" value="1"/>
</dbReference>
<dbReference type="PANTHER" id="PTHR21015">
    <property type="entry name" value="UDP-N-ACETYLGLUCOSAMINE--N-ACETYLMURAMYL-(PENTAPEPTIDE) PYROPHOSPHORYL-UNDECAPRENOL N-ACETYLGLUCOSAMINE TRANSFERASE 1"/>
    <property type="match status" value="1"/>
</dbReference>
<dbReference type="Pfam" id="PF04101">
    <property type="entry name" value="Glyco_tran_28_C"/>
    <property type="match status" value="1"/>
</dbReference>
<dbReference type="Pfam" id="PF03033">
    <property type="entry name" value="Glyco_transf_28"/>
    <property type="match status" value="1"/>
</dbReference>
<dbReference type="SUPFAM" id="SSF53756">
    <property type="entry name" value="UDP-Glycosyltransferase/glycogen phosphorylase"/>
    <property type="match status" value="1"/>
</dbReference>
<proteinExistence type="inferred from homology"/>
<sequence>MNGTISVLLAGGGTAGHVEPAMAVADALAALEPGVRITALGTERGLETRLVPERGYALELITPVPLPRKLSGDLARLPMRVRRAVRETREILDTVHADVVIGFGGYVALPAYLAARRNRVPIVVHEANASAGLANKVGARFARRVLSAVADPGLGRVEVVGTPVRSSITELDRAALRAEARAHFGFADDARVLLVFGGSQGARSLNNVVSGAAKALAAAGISVLHAYGAKNTLELPDPAPGGPPYVAVPYLSRMDLAYAAADLAICRSGAMTVAEVTAVGLPAVYVPLPIGNGEQRLNARPVVETGGGLVVDDADLSPQFVADTVVPLLTDTGRLQTMTAGAALSGHRDAARHVAHVALDVAREAAGGRKGVR</sequence>
<reference key="1">
    <citation type="submission" date="2007-02" db="EMBL/GenBank/DDBJ databases">
        <title>Complete sequence of Mycobacterium sp. JLS.</title>
        <authorList>
            <consortium name="US DOE Joint Genome Institute"/>
            <person name="Copeland A."/>
            <person name="Lucas S."/>
            <person name="Lapidus A."/>
            <person name="Barry K."/>
            <person name="Detter J.C."/>
            <person name="Glavina del Rio T."/>
            <person name="Hammon N."/>
            <person name="Israni S."/>
            <person name="Dalin E."/>
            <person name="Tice H."/>
            <person name="Pitluck S."/>
            <person name="Chain P."/>
            <person name="Malfatti S."/>
            <person name="Shin M."/>
            <person name="Vergez L."/>
            <person name="Schmutz J."/>
            <person name="Larimer F."/>
            <person name="Land M."/>
            <person name="Hauser L."/>
            <person name="Kyrpides N."/>
            <person name="Mikhailova N."/>
            <person name="Miller C.D."/>
            <person name="Anderson A.J."/>
            <person name="Sims R.C."/>
            <person name="Richardson P."/>
        </authorList>
    </citation>
    <scope>NUCLEOTIDE SEQUENCE [LARGE SCALE GENOMIC DNA]</scope>
    <source>
        <strain>JLS</strain>
    </source>
</reference>
<protein>
    <recommendedName>
        <fullName evidence="1">UDP-N-acetylglucosamine--N-acetylmuramyl-(pentapeptide) pyrophosphoryl-undecaprenol N-acetylglucosamine transferase</fullName>
        <ecNumber evidence="1">2.4.1.227</ecNumber>
    </recommendedName>
    <alternativeName>
        <fullName evidence="1">Undecaprenyl-PP-MurNAc-pentapeptide-UDPGlcNAc GlcNAc transferase</fullName>
    </alternativeName>
</protein>
<organism>
    <name type="scientific">Mycobacterium sp. (strain JLS)</name>
    <dbReference type="NCBI Taxonomy" id="164757"/>
    <lineage>
        <taxon>Bacteria</taxon>
        <taxon>Bacillati</taxon>
        <taxon>Actinomycetota</taxon>
        <taxon>Actinomycetes</taxon>
        <taxon>Mycobacteriales</taxon>
        <taxon>Mycobacteriaceae</taxon>
        <taxon>Mycobacterium</taxon>
    </lineage>
</organism>
<name>MURG_MYCSJ</name>